<proteinExistence type="evidence at transcript level"/>
<protein>
    <recommendedName>
        <fullName>Uncharacterized protein C12orf76</fullName>
    </recommendedName>
</protein>
<accession>Q8N812</accession>
<dbReference type="EMBL" id="AK097461">
    <property type="protein sequence ID" value="BAC05063.1"/>
    <property type="molecule type" value="mRNA"/>
</dbReference>
<dbReference type="EMBL" id="BC133010">
    <property type="protein sequence ID" value="AAI33011.1"/>
    <property type="molecule type" value="mRNA"/>
</dbReference>
<dbReference type="EMBL" id="BC133012">
    <property type="protein sequence ID" value="AAI33013.1"/>
    <property type="molecule type" value="mRNA"/>
</dbReference>
<dbReference type="RefSeq" id="NP_997318.1">
    <property type="nucleotide sequence ID" value="NM_207435.2"/>
</dbReference>
<dbReference type="BioGRID" id="134509">
    <property type="interactions" value="1"/>
</dbReference>
<dbReference type="FunCoup" id="Q8N812">
    <property type="interactions" value="1"/>
</dbReference>
<dbReference type="IntAct" id="Q8N812">
    <property type="interactions" value="2"/>
</dbReference>
<dbReference type="STRING" id="9606.ENSP00000498468"/>
<dbReference type="BioMuta" id="C12orf76"/>
<dbReference type="PaxDb" id="9606-ENSP00000308368"/>
<dbReference type="DNASU" id="400073"/>
<dbReference type="UCSC" id="uc001tqd.2">
    <property type="organism name" value="human"/>
</dbReference>
<dbReference type="AGR" id="HGNC:33790"/>
<dbReference type="DisGeNET" id="400073"/>
<dbReference type="GeneCards" id="C12orf76"/>
<dbReference type="HGNC" id="HGNC:33790">
    <property type="gene designation" value="C12orf76"/>
</dbReference>
<dbReference type="neXtProt" id="NX_Q8N812"/>
<dbReference type="PharmGKB" id="PA165512406"/>
<dbReference type="eggNOG" id="ENOG502TECA">
    <property type="taxonomic scope" value="Eukaryota"/>
</dbReference>
<dbReference type="HOGENOM" id="CLU_1885129_0_0_1"/>
<dbReference type="InParanoid" id="Q8N812"/>
<dbReference type="OrthoDB" id="9515612at2759"/>
<dbReference type="PAN-GO" id="Q8N812">
    <property type="GO annotations" value="0 GO annotations based on evolutionary models"/>
</dbReference>
<dbReference type="PhylomeDB" id="Q8N812"/>
<dbReference type="TreeFam" id="TF342372"/>
<dbReference type="PathwayCommons" id="Q8N812"/>
<dbReference type="SignaLink" id="Q8N812"/>
<dbReference type="BioGRID-ORCS" id="400073">
    <property type="hits" value="16 hits in 1128 CRISPR screens"/>
</dbReference>
<dbReference type="ChiTaRS" id="C12orf76">
    <property type="organism name" value="human"/>
</dbReference>
<dbReference type="GenomeRNAi" id="400073"/>
<dbReference type="Pharos" id="Q8N812">
    <property type="development level" value="Tdark"/>
</dbReference>
<dbReference type="PRO" id="PR:Q8N812"/>
<dbReference type="Proteomes" id="UP000005640">
    <property type="component" value="Unplaced"/>
</dbReference>
<dbReference type="RNAct" id="Q8N812">
    <property type="molecule type" value="protein"/>
</dbReference>
<dbReference type="InterPro" id="IPR041240">
    <property type="entry name" value="DUF5541"/>
</dbReference>
<dbReference type="Pfam" id="PF17695">
    <property type="entry name" value="DUF5541"/>
    <property type="match status" value="1"/>
</dbReference>
<reference key="1">
    <citation type="journal article" date="2004" name="Nat. Genet.">
        <title>Complete sequencing and characterization of 21,243 full-length human cDNAs.</title>
        <authorList>
            <person name="Ota T."/>
            <person name="Suzuki Y."/>
            <person name="Nishikawa T."/>
            <person name="Otsuki T."/>
            <person name="Sugiyama T."/>
            <person name="Irie R."/>
            <person name="Wakamatsu A."/>
            <person name="Hayashi K."/>
            <person name="Sato H."/>
            <person name="Nagai K."/>
            <person name="Kimura K."/>
            <person name="Makita H."/>
            <person name="Sekine M."/>
            <person name="Obayashi M."/>
            <person name="Nishi T."/>
            <person name="Shibahara T."/>
            <person name="Tanaka T."/>
            <person name="Ishii S."/>
            <person name="Yamamoto J."/>
            <person name="Saito K."/>
            <person name="Kawai Y."/>
            <person name="Isono Y."/>
            <person name="Nakamura Y."/>
            <person name="Nagahari K."/>
            <person name="Murakami K."/>
            <person name="Yasuda T."/>
            <person name="Iwayanagi T."/>
            <person name="Wagatsuma M."/>
            <person name="Shiratori A."/>
            <person name="Sudo H."/>
            <person name="Hosoiri T."/>
            <person name="Kaku Y."/>
            <person name="Kodaira H."/>
            <person name="Kondo H."/>
            <person name="Sugawara M."/>
            <person name="Takahashi M."/>
            <person name="Kanda K."/>
            <person name="Yokoi T."/>
            <person name="Furuya T."/>
            <person name="Kikkawa E."/>
            <person name="Omura Y."/>
            <person name="Abe K."/>
            <person name="Kamihara K."/>
            <person name="Katsuta N."/>
            <person name="Sato K."/>
            <person name="Tanikawa M."/>
            <person name="Yamazaki M."/>
            <person name="Ninomiya K."/>
            <person name="Ishibashi T."/>
            <person name="Yamashita H."/>
            <person name="Murakawa K."/>
            <person name="Fujimori K."/>
            <person name="Tanai H."/>
            <person name="Kimata M."/>
            <person name="Watanabe M."/>
            <person name="Hiraoka S."/>
            <person name="Chiba Y."/>
            <person name="Ishida S."/>
            <person name="Ono Y."/>
            <person name="Takiguchi S."/>
            <person name="Watanabe S."/>
            <person name="Yosida M."/>
            <person name="Hotuta T."/>
            <person name="Kusano J."/>
            <person name="Kanehori K."/>
            <person name="Takahashi-Fujii A."/>
            <person name="Hara H."/>
            <person name="Tanase T.-O."/>
            <person name="Nomura Y."/>
            <person name="Togiya S."/>
            <person name="Komai F."/>
            <person name="Hara R."/>
            <person name="Takeuchi K."/>
            <person name="Arita M."/>
            <person name="Imose N."/>
            <person name="Musashino K."/>
            <person name="Yuuki H."/>
            <person name="Oshima A."/>
            <person name="Sasaki N."/>
            <person name="Aotsuka S."/>
            <person name="Yoshikawa Y."/>
            <person name="Matsunawa H."/>
            <person name="Ichihara T."/>
            <person name="Shiohata N."/>
            <person name="Sano S."/>
            <person name="Moriya S."/>
            <person name="Momiyama H."/>
            <person name="Satoh N."/>
            <person name="Takami S."/>
            <person name="Terashima Y."/>
            <person name="Suzuki O."/>
            <person name="Nakagawa S."/>
            <person name="Senoh A."/>
            <person name="Mizoguchi H."/>
            <person name="Goto Y."/>
            <person name="Shimizu F."/>
            <person name="Wakebe H."/>
            <person name="Hishigaki H."/>
            <person name="Watanabe T."/>
            <person name="Sugiyama A."/>
            <person name="Takemoto M."/>
            <person name="Kawakami B."/>
            <person name="Yamazaki M."/>
            <person name="Watanabe K."/>
            <person name="Kumagai A."/>
            <person name="Itakura S."/>
            <person name="Fukuzumi Y."/>
            <person name="Fujimori Y."/>
            <person name="Komiyama M."/>
            <person name="Tashiro H."/>
            <person name="Tanigami A."/>
            <person name="Fujiwara T."/>
            <person name="Ono T."/>
            <person name="Yamada K."/>
            <person name="Fujii Y."/>
            <person name="Ozaki K."/>
            <person name="Hirao M."/>
            <person name="Ohmori Y."/>
            <person name="Kawabata A."/>
            <person name="Hikiji T."/>
            <person name="Kobatake N."/>
            <person name="Inagaki H."/>
            <person name="Ikema Y."/>
            <person name="Okamoto S."/>
            <person name="Okitani R."/>
            <person name="Kawakami T."/>
            <person name="Noguchi S."/>
            <person name="Itoh T."/>
            <person name="Shigeta K."/>
            <person name="Senba T."/>
            <person name="Matsumura K."/>
            <person name="Nakajima Y."/>
            <person name="Mizuno T."/>
            <person name="Morinaga M."/>
            <person name="Sasaki M."/>
            <person name="Togashi T."/>
            <person name="Oyama M."/>
            <person name="Hata H."/>
            <person name="Watanabe M."/>
            <person name="Komatsu T."/>
            <person name="Mizushima-Sugano J."/>
            <person name="Satoh T."/>
            <person name="Shirai Y."/>
            <person name="Takahashi Y."/>
            <person name="Nakagawa K."/>
            <person name="Okumura K."/>
            <person name="Nagase T."/>
            <person name="Nomura N."/>
            <person name="Kikuchi H."/>
            <person name="Masuho Y."/>
            <person name="Yamashita R."/>
            <person name="Nakai K."/>
            <person name="Yada T."/>
            <person name="Nakamura Y."/>
            <person name="Ohara O."/>
            <person name="Isogai T."/>
            <person name="Sugano S."/>
        </authorList>
    </citation>
    <scope>NUCLEOTIDE SEQUENCE [LARGE SCALE MRNA]</scope>
    <source>
        <tissue>Testis</tissue>
    </source>
</reference>
<reference key="2">
    <citation type="journal article" date="2004" name="Genome Res.">
        <title>The status, quality, and expansion of the NIH full-length cDNA project: the Mammalian Gene Collection (MGC).</title>
        <authorList>
            <consortium name="The MGC Project Team"/>
        </authorList>
    </citation>
    <scope>NUCLEOTIDE SEQUENCE [LARGE SCALE MRNA]</scope>
    <source>
        <tissue>Brain</tissue>
    </source>
</reference>
<reference key="3">
    <citation type="journal article" date="2006" name="Science">
        <title>The consensus coding sequences of human breast and colorectal cancers.</title>
        <authorList>
            <person name="Sjoeblom T."/>
            <person name="Jones S."/>
            <person name="Wood L.D."/>
            <person name="Parsons D.W."/>
            <person name="Lin J."/>
            <person name="Barber T.D."/>
            <person name="Mandelker D."/>
            <person name="Leary R.J."/>
            <person name="Ptak J."/>
            <person name="Silliman N."/>
            <person name="Szabo S."/>
            <person name="Buckhaults P."/>
            <person name="Farrell C."/>
            <person name="Meeh P."/>
            <person name="Markowitz S.D."/>
            <person name="Willis J."/>
            <person name="Dawson D."/>
            <person name="Willson J.K.V."/>
            <person name="Gazdar A.F."/>
            <person name="Hartigan J."/>
            <person name="Wu L."/>
            <person name="Liu C."/>
            <person name="Parmigiani G."/>
            <person name="Park B.H."/>
            <person name="Bachman K.E."/>
            <person name="Papadopoulos N."/>
            <person name="Vogelstein B."/>
            <person name="Kinzler K.W."/>
            <person name="Velculescu V.E."/>
        </authorList>
    </citation>
    <scope>VARIANT [LARGE SCALE ANALYSIS] THR-26</scope>
</reference>
<gene>
    <name type="primary">C12orf76</name>
</gene>
<name>CL076_HUMAN</name>
<keyword id="KW-1185">Reference proteome</keyword>
<feature type="chain" id="PRO_0000325799" description="Uncharacterized protein C12orf76">
    <location>
        <begin position="1"/>
        <end position="135"/>
    </location>
</feature>
<feature type="sequence variant" id="VAR_039916" description="In a colorectal cancer sample; somatic mutation." evidence="1">
    <original>A</original>
    <variation>T</variation>
    <location>
        <position position="26"/>
    </location>
</feature>
<organism>
    <name type="scientific">Homo sapiens</name>
    <name type="common">Human</name>
    <dbReference type="NCBI Taxonomy" id="9606"/>
    <lineage>
        <taxon>Eukaryota</taxon>
        <taxon>Metazoa</taxon>
        <taxon>Chordata</taxon>
        <taxon>Craniata</taxon>
        <taxon>Vertebrata</taxon>
        <taxon>Euteleostomi</taxon>
        <taxon>Mammalia</taxon>
        <taxon>Eutheria</taxon>
        <taxon>Euarchontoglires</taxon>
        <taxon>Primates</taxon>
        <taxon>Haplorrhini</taxon>
        <taxon>Catarrhini</taxon>
        <taxon>Hominidae</taxon>
        <taxon>Homo</taxon>
    </lineage>
</organism>
<sequence>MFQNLQGTFEKEIGKIIPFTIAFKRAEAVEPDGCVQSWRCCLPCDLGQASRFIHTTVCSAIRWRSCKGERNFAERHILPAELEEQSNHAGMGPILPAMPSVDGNHFQHPAGDCHPYGILCLQAHSASVTARQVLQ</sequence>
<evidence type="ECO:0000269" key="1">
    <source>
    </source>
</evidence>